<evidence type="ECO:0000250" key="1"/>
<evidence type="ECO:0000250" key="2">
    <source>
        <dbReference type="UniProtKB" id="Q9ZSD4"/>
    </source>
</evidence>
<evidence type="ECO:0000255" key="3"/>
<evidence type="ECO:0000255" key="4">
    <source>
        <dbReference type="PROSITE-ProRule" id="PRU00202"/>
    </source>
</evidence>
<evidence type="ECO:0000305" key="5"/>
<comment type="function">
    <text evidence="1">Vesicle trafficking protein that functions in the secretory pathway.</text>
</comment>
<comment type="subunit">
    <text evidence="5">Part of the t-SNARE complex.</text>
</comment>
<comment type="similarity">
    <text evidence="5">Belongs to the syntaxin family.</text>
</comment>
<comment type="sequence caution" evidence="5">
    <conflict type="erroneous gene model prediction">
        <sequence resource="EMBL-CDS" id="AAD15510"/>
    </conflict>
</comment>
<keyword id="KW-0007">Acetylation</keyword>
<keyword id="KW-0175">Coiled coil</keyword>
<keyword id="KW-0653">Protein transport</keyword>
<keyword id="KW-1185">Reference proteome</keyword>
<keyword id="KW-0813">Transport</keyword>
<organism>
    <name type="scientific">Arabidopsis thaliana</name>
    <name type="common">Mouse-ear cress</name>
    <dbReference type="NCBI Taxonomy" id="3702"/>
    <lineage>
        <taxon>Eukaryota</taxon>
        <taxon>Viridiplantae</taxon>
        <taxon>Streptophyta</taxon>
        <taxon>Embryophyta</taxon>
        <taxon>Tracheophyta</taxon>
        <taxon>Spermatophyta</taxon>
        <taxon>Magnoliopsida</taxon>
        <taxon>eudicotyledons</taxon>
        <taxon>Gunneridae</taxon>
        <taxon>Pentapetalae</taxon>
        <taxon>rosids</taxon>
        <taxon>malvids</taxon>
        <taxon>Brassicales</taxon>
        <taxon>Brassicaceae</taxon>
        <taxon>Camelineae</taxon>
        <taxon>Arabidopsis</taxon>
    </lineage>
</organism>
<name>SY112_ARATH</name>
<protein>
    <recommendedName>
        <fullName>Syntaxin-112</fullName>
        <shortName>AtSYP112</shortName>
    </recommendedName>
</protein>
<dbReference type="EMBL" id="AC006439">
    <property type="protein sequence ID" value="AAD15510.1"/>
    <property type="status" value="ALT_SEQ"/>
    <property type="molecule type" value="Genomic_DNA"/>
</dbReference>
<dbReference type="EMBL" id="CP002685">
    <property type="protein sequence ID" value="AEC06747.1"/>
    <property type="molecule type" value="Genomic_DNA"/>
</dbReference>
<dbReference type="EMBL" id="CP002685">
    <property type="protein sequence ID" value="ANM61828.1"/>
    <property type="molecule type" value="Genomic_DNA"/>
</dbReference>
<dbReference type="EMBL" id="DQ446518">
    <property type="protein sequence ID" value="ABE65824.1"/>
    <property type="molecule type" value="mRNA"/>
</dbReference>
<dbReference type="PIR" id="C84562">
    <property type="entry name" value="C84562"/>
</dbReference>
<dbReference type="RefSeq" id="NP_001318245.1">
    <property type="nucleotide sequence ID" value="NM_001335591.1"/>
</dbReference>
<dbReference type="RefSeq" id="NP_179418.2">
    <property type="nucleotide sequence ID" value="NM_127384.4"/>
</dbReference>
<dbReference type="SMR" id="Q9ZPV9"/>
<dbReference type="FunCoup" id="Q9ZPV9">
    <property type="interactions" value="511"/>
</dbReference>
<dbReference type="STRING" id="3702.Q9ZPV9"/>
<dbReference type="iPTMnet" id="Q9ZPV9"/>
<dbReference type="PaxDb" id="3702-AT2G18260.1"/>
<dbReference type="ProteomicsDB" id="226771"/>
<dbReference type="EnsemblPlants" id="AT2G18260.1">
    <property type="protein sequence ID" value="AT2G18260.1"/>
    <property type="gene ID" value="AT2G18260"/>
</dbReference>
<dbReference type="EnsemblPlants" id="AT2G18260.2">
    <property type="protein sequence ID" value="AT2G18260.2"/>
    <property type="gene ID" value="AT2G18260"/>
</dbReference>
<dbReference type="GeneID" id="816342"/>
<dbReference type="Gramene" id="AT2G18260.1">
    <property type="protein sequence ID" value="AT2G18260.1"/>
    <property type="gene ID" value="AT2G18260"/>
</dbReference>
<dbReference type="Gramene" id="AT2G18260.2">
    <property type="protein sequence ID" value="AT2G18260.2"/>
    <property type="gene ID" value="AT2G18260"/>
</dbReference>
<dbReference type="KEGG" id="ath:AT2G18260"/>
<dbReference type="Araport" id="AT2G18260"/>
<dbReference type="TAIR" id="AT2G18260">
    <property type="gene designation" value="SYP112"/>
</dbReference>
<dbReference type="eggNOG" id="KOG0810">
    <property type="taxonomic scope" value="Eukaryota"/>
</dbReference>
<dbReference type="HOGENOM" id="CLU_042423_1_1_1"/>
<dbReference type="InParanoid" id="Q9ZPV9"/>
<dbReference type="OMA" id="KTTHGPK"/>
<dbReference type="PhylomeDB" id="Q9ZPV9"/>
<dbReference type="PRO" id="PR:Q9ZPV9"/>
<dbReference type="Proteomes" id="UP000006548">
    <property type="component" value="Chromosome 2"/>
</dbReference>
<dbReference type="ExpressionAtlas" id="Q9ZPV9">
    <property type="expression patterns" value="baseline and differential"/>
</dbReference>
<dbReference type="GO" id="GO:0016020">
    <property type="term" value="C:membrane"/>
    <property type="evidence" value="ECO:0007669"/>
    <property type="project" value="InterPro"/>
</dbReference>
<dbReference type="GO" id="GO:0005634">
    <property type="term" value="C:nucleus"/>
    <property type="evidence" value="ECO:0007005"/>
    <property type="project" value="TAIR"/>
</dbReference>
<dbReference type="GO" id="GO:0005484">
    <property type="term" value="F:SNAP receptor activity"/>
    <property type="evidence" value="ECO:0007669"/>
    <property type="project" value="InterPro"/>
</dbReference>
<dbReference type="GO" id="GO:0006886">
    <property type="term" value="P:intracellular protein transport"/>
    <property type="evidence" value="ECO:0007669"/>
    <property type="project" value="InterPro"/>
</dbReference>
<dbReference type="GO" id="GO:0016192">
    <property type="term" value="P:vesicle-mediated transport"/>
    <property type="evidence" value="ECO:0007669"/>
    <property type="project" value="InterPro"/>
</dbReference>
<dbReference type="CDD" id="cd15848">
    <property type="entry name" value="SNARE_syntaxin1-like"/>
    <property type="match status" value="1"/>
</dbReference>
<dbReference type="CDD" id="cd00179">
    <property type="entry name" value="SynN"/>
    <property type="match status" value="1"/>
</dbReference>
<dbReference type="FunFam" id="1.20.58.70:FF:000003">
    <property type="entry name" value="Qa-SNARE, Sso1/Syntaxin1-type, SYP12A-group"/>
    <property type="match status" value="1"/>
</dbReference>
<dbReference type="FunFam" id="1.20.5.110:FF:000008">
    <property type="entry name" value="Syntaxin 132"/>
    <property type="match status" value="1"/>
</dbReference>
<dbReference type="Gene3D" id="1.20.5.110">
    <property type="match status" value="1"/>
</dbReference>
<dbReference type="Gene3D" id="1.20.58.70">
    <property type="match status" value="1"/>
</dbReference>
<dbReference type="InterPro" id="IPR010989">
    <property type="entry name" value="SNARE"/>
</dbReference>
<dbReference type="InterPro" id="IPR045242">
    <property type="entry name" value="Syntaxin"/>
</dbReference>
<dbReference type="InterPro" id="IPR006012">
    <property type="entry name" value="Syntaxin/epimorphin_CS"/>
</dbReference>
<dbReference type="InterPro" id="IPR006011">
    <property type="entry name" value="Syntaxin_N"/>
</dbReference>
<dbReference type="InterPro" id="IPR000727">
    <property type="entry name" value="T_SNARE_dom"/>
</dbReference>
<dbReference type="PANTHER" id="PTHR19957">
    <property type="entry name" value="SYNTAXIN"/>
    <property type="match status" value="1"/>
</dbReference>
<dbReference type="PANTHER" id="PTHR19957:SF123">
    <property type="entry name" value="SYNTAXIN-112"/>
    <property type="match status" value="1"/>
</dbReference>
<dbReference type="Pfam" id="PF05739">
    <property type="entry name" value="SNARE"/>
    <property type="match status" value="1"/>
</dbReference>
<dbReference type="Pfam" id="PF00804">
    <property type="entry name" value="Syntaxin"/>
    <property type="match status" value="1"/>
</dbReference>
<dbReference type="SMART" id="SM00503">
    <property type="entry name" value="SynN"/>
    <property type="match status" value="1"/>
</dbReference>
<dbReference type="SMART" id="SM00397">
    <property type="entry name" value="t_SNARE"/>
    <property type="match status" value="1"/>
</dbReference>
<dbReference type="SUPFAM" id="SSF47661">
    <property type="entry name" value="t-snare proteins"/>
    <property type="match status" value="1"/>
</dbReference>
<dbReference type="PROSITE" id="PS00914">
    <property type="entry name" value="SYNTAXIN"/>
    <property type="match status" value="1"/>
</dbReference>
<dbReference type="PROSITE" id="PS50192">
    <property type="entry name" value="T_SNARE"/>
    <property type="match status" value="1"/>
</dbReference>
<sequence>MNDLMTKSFLSYVELKKQARTDMESDRDLEKGEDFNFDFSPADEENLSGFFQEIETIKTLIEEITHLLLDLQNLNEETKSTHSTKILRGLRDRMESNIVTISRKANTVKTLIETLEKRNVANRTSFKEGSCVDRTRTSITNGVRKKLRDTMSEFHRLRERIFADYREDLKRKYFLATGEEPSNEDMEKMISGSGSCSDLVKTFEVKPEMDLKTKERHEAVNDIKRSLNRLHQVFLDMAVLVETQGDRIDDIEANVANAGSFVSGGTNSLYYANQMKKKTKSWVLWVSILGVLILLVCVISMLASR</sequence>
<proteinExistence type="evidence at transcript level"/>
<accession>Q9ZPV9</accession>
<accession>Q1PF48</accession>
<gene>
    <name type="primary">SYP112</name>
    <name type="ordered locus">At2g18260</name>
    <name type="ORF">T30D6.23</name>
</gene>
<feature type="chain" id="PRO_0000210245" description="Syntaxin-112">
    <location>
        <begin position="1"/>
        <end position="305"/>
    </location>
</feature>
<feature type="domain" description="t-SNARE coiled-coil homology" evidence="4">
    <location>
        <begin position="210"/>
        <end position="272"/>
    </location>
</feature>
<feature type="coiled-coil region" evidence="3">
    <location>
        <begin position="52"/>
        <end position="119"/>
    </location>
</feature>
<feature type="modified residue" description="N-acetylmethionine" evidence="2">
    <location>
        <position position="1"/>
    </location>
</feature>
<reference key="1">
    <citation type="journal article" date="1999" name="Nature">
        <title>Sequence and analysis of chromosome 2 of the plant Arabidopsis thaliana.</title>
        <authorList>
            <person name="Lin X."/>
            <person name="Kaul S."/>
            <person name="Rounsley S.D."/>
            <person name="Shea T.P."/>
            <person name="Benito M.-I."/>
            <person name="Town C.D."/>
            <person name="Fujii C.Y."/>
            <person name="Mason T.M."/>
            <person name="Bowman C.L."/>
            <person name="Barnstead M.E."/>
            <person name="Feldblyum T.V."/>
            <person name="Buell C.R."/>
            <person name="Ketchum K.A."/>
            <person name="Lee J.J."/>
            <person name="Ronning C.M."/>
            <person name="Koo H.L."/>
            <person name="Moffat K.S."/>
            <person name="Cronin L.A."/>
            <person name="Shen M."/>
            <person name="Pai G."/>
            <person name="Van Aken S."/>
            <person name="Umayam L."/>
            <person name="Tallon L.J."/>
            <person name="Gill J.E."/>
            <person name="Adams M.D."/>
            <person name="Carrera A.J."/>
            <person name="Creasy T.H."/>
            <person name="Goodman H.M."/>
            <person name="Somerville C.R."/>
            <person name="Copenhaver G.P."/>
            <person name="Preuss D."/>
            <person name="Nierman W.C."/>
            <person name="White O."/>
            <person name="Eisen J.A."/>
            <person name="Salzberg S.L."/>
            <person name="Fraser C.M."/>
            <person name="Venter J.C."/>
        </authorList>
    </citation>
    <scope>NUCLEOTIDE SEQUENCE [LARGE SCALE GENOMIC DNA]</scope>
    <source>
        <strain>cv. Columbia</strain>
    </source>
</reference>
<reference key="2">
    <citation type="journal article" date="2017" name="Plant J.">
        <title>Araport11: a complete reannotation of the Arabidopsis thaliana reference genome.</title>
        <authorList>
            <person name="Cheng C.Y."/>
            <person name="Krishnakumar V."/>
            <person name="Chan A.P."/>
            <person name="Thibaud-Nissen F."/>
            <person name="Schobel S."/>
            <person name="Town C.D."/>
        </authorList>
    </citation>
    <scope>GENOME REANNOTATION</scope>
    <source>
        <strain>cv. Columbia</strain>
    </source>
</reference>
<reference key="3">
    <citation type="journal article" date="2006" name="Plant Biotechnol. J.">
        <title>Simultaneous high-throughput recombinational cloning of open reading frames in closed and open configurations.</title>
        <authorList>
            <person name="Underwood B.A."/>
            <person name="Vanderhaeghen R."/>
            <person name="Whitford R."/>
            <person name="Town C.D."/>
            <person name="Hilson P."/>
        </authorList>
    </citation>
    <scope>NUCLEOTIDE SEQUENCE [LARGE SCALE MRNA]</scope>
    <source>
        <strain>cv. Columbia</strain>
    </source>
</reference>